<dbReference type="EC" id="7.6.2.-" evidence="3"/>
<dbReference type="EMBL" id="BA000004">
    <property type="protein sequence ID" value="BAB06399.1"/>
    <property type="molecule type" value="Genomic_DNA"/>
</dbReference>
<dbReference type="PIR" id="H83984">
    <property type="entry name" value="H83984"/>
</dbReference>
<dbReference type="RefSeq" id="WP_010898829.1">
    <property type="nucleotide sequence ID" value="NC_002570.2"/>
</dbReference>
<dbReference type="SMR" id="Q9K9G7"/>
<dbReference type="STRING" id="272558.gene:10728578"/>
<dbReference type="KEGG" id="bha:BH2680"/>
<dbReference type="eggNOG" id="COG1116">
    <property type="taxonomic scope" value="Bacteria"/>
</dbReference>
<dbReference type="HOGENOM" id="CLU_000604_1_22_9"/>
<dbReference type="OrthoDB" id="9802264at2"/>
<dbReference type="UniPathway" id="UPA00060"/>
<dbReference type="Proteomes" id="UP000001258">
    <property type="component" value="Chromosome"/>
</dbReference>
<dbReference type="GO" id="GO:0005886">
    <property type="term" value="C:plasma membrane"/>
    <property type="evidence" value="ECO:0007669"/>
    <property type="project" value="UniProtKB-SubCell"/>
</dbReference>
<dbReference type="GO" id="GO:0005524">
    <property type="term" value="F:ATP binding"/>
    <property type="evidence" value="ECO:0007669"/>
    <property type="project" value="UniProtKB-KW"/>
</dbReference>
<dbReference type="GO" id="GO:0016887">
    <property type="term" value="F:ATP hydrolysis activity"/>
    <property type="evidence" value="ECO:0007669"/>
    <property type="project" value="InterPro"/>
</dbReference>
<dbReference type="GO" id="GO:0009229">
    <property type="term" value="P:thiamine diphosphate biosynthetic process"/>
    <property type="evidence" value="ECO:0007669"/>
    <property type="project" value="UniProtKB-UniPathway"/>
</dbReference>
<dbReference type="Gene3D" id="3.40.50.300">
    <property type="entry name" value="P-loop containing nucleotide triphosphate hydrolases"/>
    <property type="match status" value="1"/>
</dbReference>
<dbReference type="InterPro" id="IPR003593">
    <property type="entry name" value="AAA+_ATPase"/>
</dbReference>
<dbReference type="InterPro" id="IPR003439">
    <property type="entry name" value="ABC_transporter-like_ATP-bd"/>
</dbReference>
<dbReference type="InterPro" id="IPR017871">
    <property type="entry name" value="ABC_transporter-like_CS"/>
</dbReference>
<dbReference type="InterPro" id="IPR050166">
    <property type="entry name" value="ABC_transporter_ATP-bind"/>
</dbReference>
<dbReference type="InterPro" id="IPR027417">
    <property type="entry name" value="P-loop_NTPase"/>
</dbReference>
<dbReference type="PANTHER" id="PTHR42788:SF2">
    <property type="entry name" value="ABC TRANSPORTER ATP-BINDING PROTEIN"/>
    <property type="match status" value="1"/>
</dbReference>
<dbReference type="PANTHER" id="PTHR42788">
    <property type="entry name" value="TAURINE IMPORT ATP-BINDING PROTEIN-RELATED"/>
    <property type="match status" value="1"/>
</dbReference>
<dbReference type="Pfam" id="PF00005">
    <property type="entry name" value="ABC_tran"/>
    <property type="match status" value="1"/>
</dbReference>
<dbReference type="SMART" id="SM00382">
    <property type="entry name" value="AAA"/>
    <property type="match status" value="1"/>
</dbReference>
<dbReference type="SUPFAM" id="SSF52540">
    <property type="entry name" value="P-loop containing nucleoside triphosphate hydrolases"/>
    <property type="match status" value="1"/>
</dbReference>
<dbReference type="PROSITE" id="PS00211">
    <property type="entry name" value="ABC_TRANSPORTER_1"/>
    <property type="match status" value="1"/>
</dbReference>
<dbReference type="PROSITE" id="PS50893">
    <property type="entry name" value="ABC_TRANSPORTER_2"/>
    <property type="match status" value="1"/>
</dbReference>
<keyword id="KW-0067">ATP-binding</keyword>
<keyword id="KW-1003">Cell membrane</keyword>
<keyword id="KW-0472">Membrane</keyword>
<keyword id="KW-0547">Nucleotide-binding</keyword>
<keyword id="KW-1185">Reference proteome</keyword>
<keyword id="KW-1278">Translocase</keyword>
<keyword id="KW-0813">Transport</keyword>
<organism>
    <name type="scientific">Halalkalibacterium halodurans (strain ATCC BAA-125 / DSM 18197 / FERM 7344 / JCM 9153 / C-125)</name>
    <name type="common">Bacillus halodurans</name>
    <dbReference type="NCBI Taxonomy" id="272558"/>
    <lineage>
        <taxon>Bacteria</taxon>
        <taxon>Bacillati</taxon>
        <taxon>Bacillota</taxon>
        <taxon>Bacilli</taxon>
        <taxon>Bacillales</taxon>
        <taxon>Bacillaceae</taxon>
        <taxon>Halalkalibacterium (ex Joshi et al. 2022)</taxon>
    </lineage>
</organism>
<proteinExistence type="inferred from homology"/>
<comment type="function">
    <text evidence="2 3">Participates in a thiamine pyrimidine salvage pathway as part of the ABC transporter complex ThiXYZ involved in the import of thiamine degradation products such as the formylaminopyrimidine N-formyl-4-amino-5-aminomethyl-2-methylpyrimidine (FAMP). Is likely responsible for energy coupling to the transport system.</text>
</comment>
<comment type="pathway">
    <text evidence="2">Cofactor biosynthesis; thiamine diphosphate biosynthesis.</text>
</comment>
<comment type="subunit">
    <text evidence="2 3">The complex is likely composed of an ATP-binding protein (ThiZ), a transmembrane protein (ThiX) and a solute-binding protein (ThiY).</text>
</comment>
<comment type="subcellular location">
    <subcellularLocation>
        <location>Cell membrane</location>
        <topology evidence="3">Peripheral membrane protein</topology>
    </subcellularLocation>
</comment>
<comment type="similarity">
    <text evidence="3">Belongs to the ABC transporter superfamily.</text>
</comment>
<name>THIZ_HALH5</name>
<protein>
    <recommendedName>
        <fullName evidence="3">Formylaminopyrimidine import ATP-binding protein ThiZ</fullName>
        <shortName evidence="3">FAMP import ATP-binding protein</shortName>
        <ecNumber evidence="3">7.6.2.-</ecNumber>
    </recommendedName>
</protein>
<evidence type="ECO:0000255" key="1">
    <source>
        <dbReference type="PROSITE-ProRule" id="PRU00434"/>
    </source>
</evidence>
<evidence type="ECO:0000303" key="2">
    <source>
    </source>
</evidence>
<evidence type="ECO:0000305" key="3"/>
<evidence type="ECO:0000312" key="4">
    <source>
        <dbReference type="EMBL" id="BAB06399.1"/>
    </source>
</evidence>
<reference key="1">
    <citation type="journal article" date="2000" name="Nucleic Acids Res.">
        <title>Complete genome sequence of the alkaliphilic bacterium Bacillus halodurans and genomic sequence comparison with Bacillus subtilis.</title>
        <authorList>
            <person name="Takami H."/>
            <person name="Nakasone K."/>
            <person name="Takaki Y."/>
            <person name="Maeno G."/>
            <person name="Sasaki R."/>
            <person name="Masui N."/>
            <person name="Fuji F."/>
            <person name="Hirama C."/>
            <person name="Nakamura Y."/>
            <person name="Ogasawara N."/>
            <person name="Kuhara S."/>
            <person name="Horikoshi K."/>
        </authorList>
    </citation>
    <scope>NUCLEOTIDE SEQUENCE [LARGE SCALE GENOMIC DNA]</scope>
    <source>
        <strain>ATCC BAA-125 / DSM 18197 / FERM 7344 / JCM 9153 / C-125</strain>
    </source>
</reference>
<reference key="2">
    <citation type="journal article" date="2007" name="Nat. Chem. Biol.">
        <title>A new thiamin salvage pathway.</title>
        <authorList>
            <person name="Jenkins A.H."/>
            <person name="Schyns G."/>
            <person name="Potot S."/>
            <person name="Sun G."/>
            <person name="Begley T.P."/>
        </authorList>
    </citation>
    <scope>FUNCTION</scope>
    <scope>PATHWAY</scope>
</reference>
<sequence>MVKELLTFEEVSFAYSSSSPVIERLSFTVFENEIVAILAKSGSGKSTLFRLITRLESPDQGTIVCHAQGKIGYMPQQDLLLPWLTILENVSLPLEIQGKDKKEAKIIAASFFNRFGLVGTESLYPDALSGGMRQRAAFLRATLTSETLLLLDEPFASLDSLTKTSMHHWLVSMWEKEKRTLLLVTHDIEEALLLSDRLFIFTNQPLHGFTEVQVPPDLRRKMETTEKMEQQRSSLKKDIRALLIEESLR</sequence>
<feature type="chain" id="PRO_0000431517" description="Formylaminopyrimidine import ATP-binding protein ThiZ">
    <location>
        <begin position="1"/>
        <end position="249"/>
    </location>
</feature>
<feature type="domain" description="ABC transporter" evidence="1">
    <location>
        <begin position="6"/>
        <end position="228"/>
    </location>
</feature>
<feature type="binding site" evidence="1">
    <location>
        <begin position="39"/>
        <end position="46"/>
    </location>
    <ligand>
        <name>ATP</name>
        <dbReference type="ChEBI" id="CHEBI:30616"/>
    </ligand>
</feature>
<accession>Q9K9G7</accession>
<gene>
    <name evidence="2" type="primary">thiZ</name>
    <name evidence="4" type="ordered locus">BH2680</name>
</gene>